<organism>
    <name type="scientific">Pseudomonas aeruginosa (strain ATCC 15692 / DSM 22644 / CIP 104116 / JCM 14847 / LMG 12228 / 1C / PRS 101 / PAO1)</name>
    <dbReference type="NCBI Taxonomy" id="208964"/>
    <lineage>
        <taxon>Bacteria</taxon>
        <taxon>Pseudomonadati</taxon>
        <taxon>Pseudomonadota</taxon>
        <taxon>Gammaproteobacteria</taxon>
        <taxon>Pseudomonadales</taxon>
        <taxon>Pseudomonadaceae</taxon>
        <taxon>Pseudomonas</taxon>
    </lineage>
</organism>
<dbReference type="EMBL" id="AE004091">
    <property type="protein sequence ID" value="AAG07639.1"/>
    <property type="molecule type" value="Genomic_DNA"/>
</dbReference>
<dbReference type="PIR" id="A83115">
    <property type="entry name" value="A83115"/>
</dbReference>
<dbReference type="RefSeq" id="NP_252941.1">
    <property type="nucleotide sequence ID" value="NC_002516.2"/>
</dbReference>
<dbReference type="RefSeq" id="WP_003093703.1">
    <property type="nucleotide sequence ID" value="NZ_QZGE01000028.1"/>
</dbReference>
<dbReference type="PDB" id="7UNR">
    <property type="method" value="EM"/>
    <property type="resolution" value="2.90 A"/>
    <property type="chains" value="F=1-179"/>
</dbReference>
<dbReference type="PDB" id="7UNU">
    <property type="method" value="EM"/>
    <property type="resolution" value="2.90 A"/>
    <property type="chains" value="F=1-179"/>
</dbReference>
<dbReference type="PDB" id="7UNV">
    <property type="method" value="EM"/>
    <property type="resolution" value="2.70 A"/>
    <property type="chains" value="F=1-179"/>
</dbReference>
<dbReference type="PDB" id="7UNW">
    <property type="method" value="EM"/>
    <property type="resolution" value="2.60 A"/>
    <property type="chains" value="F=1-179"/>
</dbReference>
<dbReference type="PDB" id="8CD1">
    <property type="method" value="EM"/>
    <property type="resolution" value="3.00 A"/>
    <property type="chains" value="F=1-179"/>
</dbReference>
<dbReference type="PDB" id="8RWG">
    <property type="method" value="EM"/>
    <property type="resolution" value="2.46 A"/>
    <property type="chains" value="G=1-179"/>
</dbReference>
<dbReference type="PDBsum" id="7UNR"/>
<dbReference type="PDBsum" id="7UNU"/>
<dbReference type="PDBsum" id="7UNV"/>
<dbReference type="PDBsum" id="7UNW"/>
<dbReference type="PDBsum" id="8CD1"/>
<dbReference type="PDBsum" id="8RWG"/>
<dbReference type="EMDB" id="EMD-16566"/>
<dbReference type="EMDB" id="EMD-19547"/>
<dbReference type="EMDB" id="EMD-26630"/>
<dbReference type="EMDB" id="EMD-26633"/>
<dbReference type="EMDB" id="EMD-26634"/>
<dbReference type="EMDB" id="EMD-26635"/>
<dbReference type="SMR" id="Q9HWE7"/>
<dbReference type="FunCoup" id="Q9HWE7">
    <property type="interactions" value="890"/>
</dbReference>
<dbReference type="STRING" id="208964.PA4251"/>
<dbReference type="PaxDb" id="208964-PA4251"/>
<dbReference type="DNASU" id="881779"/>
<dbReference type="GeneID" id="881779"/>
<dbReference type="KEGG" id="pae:PA4251"/>
<dbReference type="PATRIC" id="fig|208964.12.peg.4452"/>
<dbReference type="PseudoCAP" id="PA4251"/>
<dbReference type="HOGENOM" id="CLU_061015_2_1_6"/>
<dbReference type="InParanoid" id="Q9HWE7"/>
<dbReference type="OrthoDB" id="9806626at2"/>
<dbReference type="PhylomeDB" id="Q9HWE7"/>
<dbReference type="BioCyc" id="PAER208964:G1FZ6-4324-MONOMER"/>
<dbReference type="PRO" id="PR:Q9HWE7"/>
<dbReference type="Proteomes" id="UP000002438">
    <property type="component" value="Chromosome"/>
</dbReference>
<dbReference type="GO" id="GO:0022625">
    <property type="term" value="C:cytosolic large ribosomal subunit"/>
    <property type="evidence" value="ECO:0000318"/>
    <property type="project" value="GO_Central"/>
</dbReference>
<dbReference type="GO" id="GO:0003723">
    <property type="term" value="F:RNA binding"/>
    <property type="evidence" value="ECO:0000318"/>
    <property type="project" value="GO_Central"/>
</dbReference>
<dbReference type="GO" id="GO:0019843">
    <property type="term" value="F:rRNA binding"/>
    <property type="evidence" value="ECO:0007669"/>
    <property type="project" value="UniProtKB-UniRule"/>
</dbReference>
<dbReference type="GO" id="GO:0003735">
    <property type="term" value="F:structural constituent of ribosome"/>
    <property type="evidence" value="ECO:0000318"/>
    <property type="project" value="GO_Central"/>
</dbReference>
<dbReference type="GO" id="GO:0000049">
    <property type="term" value="F:tRNA binding"/>
    <property type="evidence" value="ECO:0007669"/>
    <property type="project" value="UniProtKB-UniRule"/>
</dbReference>
<dbReference type="GO" id="GO:0006412">
    <property type="term" value="P:translation"/>
    <property type="evidence" value="ECO:0000318"/>
    <property type="project" value="GO_Central"/>
</dbReference>
<dbReference type="FunFam" id="3.30.1440.10:FF:000001">
    <property type="entry name" value="50S ribosomal protein L5"/>
    <property type="match status" value="1"/>
</dbReference>
<dbReference type="Gene3D" id="3.30.1440.10">
    <property type="match status" value="1"/>
</dbReference>
<dbReference type="HAMAP" id="MF_01333_B">
    <property type="entry name" value="Ribosomal_uL5_B"/>
    <property type="match status" value="1"/>
</dbReference>
<dbReference type="InterPro" id="IPR002132">
    <property type="entry name" value="Ribosomal_uL5"/>
</dbReference>
<dbReference type="InterPro" id="IPR020930">
    <property type="entry name" value="Ribosomal_uL5_bac-type"/>
</dbReference>
<dbReference type="InterPro" id="IPR031309">
    <property type="entry name" value="Ribosomal_uL5_C"/>
</dbReference>
<dbReference type="InterPro" id="IPR020929">
    <property type="entry name" value="Ribosomal_uL5_CS"/>
</dbReference>
<dbReference type="InterPro" id="IPR022803">
    <property type="entry name" value="Ribosomal_uL5_dom_sf"/>
</dbReference>
<dbReference type="InterPro" id="IPR031310">
    <property type="entry name" value="Ribosomal_uL5_N"/>
</dbReference>
<dbReference type="NCBIfam" id="NF000585">
    <property type="entry name" value="PRK00010.1"/>
    <property type="match status" value="1"/>
</dbReference>
<dbReference type="PANTHER" id="PTHR11994">
    <property type="entry name" value="60S RIBOSOMAL PROTEIN L11-RELATED"/>
    <property type="match status" value="1"/>
</dbReference>
<dbReference type="Pfam" id="PF00281">
    <property type="entry name" value="Ribosomal_L5"/>
    <property type="match status" value="1"/>
</dbReference>
<dbReference type="Pfam" id="PF00673">
    <property type="entry name" value="Ribosomal_L5_C"/>
    <property type="match status" value="1"/>
</dbReference>
<dbReference type="PIRSF" id="PIRSF002161">
    <property type="entry name" value="Ribosomal_L5"/>
    <property type="match status" value="1"/>
</dbReference>
<dbReference type="SUPFAM" id="SSF55282">
    <property type="entry name" value="RL5-like"/>
    <property type="match status" value="1"/>
</dbReference>
<dbReference type="PROSITE" id="PS00358">
    <property type="entry name" value="RIBOSOMAL_L5"/>
    <property type="match status" value="1"/>
</dbReference>
<name>RL5_PSEAE</name>
<proteinExistence type="evidence at protein level"/>
<keyword id="KW-0002">3D-structure</keyword>
<keyword id="KW-1185">Reference proteome</keyword>
<keyword id="KW-0687">Ribonucleoprotein</keyword>
<keyword id="KW-0689">Ribosomal protein</keyword>
<keyword id="KW-0694">RNA-binding</keyword>
<keyword id="KW-0699">rRNA-binding</keyword>
<keyword id="KW-0820">tRNA-binding</keyword>
<sequence length="179" mass="20392">MARLKEIYRKEIAPKLKEELQLANVMEVPRVTKITLNMGLGEAVGDKKIIENAVADLEKITGQKPVVTYARKSIAGFKIREGWPIGVKVTLRSDRMYEFLDRLLSISLPRVRDFRGLNAKSFDGRGNYSMGVKEQIIFPEIDYDKIDALRGLDITLTTTARTDDEGRALLRAFKFPFRN</sequence>
<evidence type="ECO:0000255" key="1">
    <source>
        <dbReference type="HAMAP-Rule" id="MF_01333"/>
    </source>
</evidence>
<evidence type="ECO:0000305" key="2"/>
<gene>
    <name evidence="1" type="primary">rplE</name>
    <name type="ordered locus">PA4251</name>
</gene>
<reference key="1">
    <citation type="journal article" date="2000" name="Nature">
        <title>Complete genome sequence of Pseudomonas aeruginosa PAO1, an opportunistic pathogen.</title>
        <authorList>
            <person name="Stover C.K."/>
            <person name="Pham X.-Q.T."/>
            <person name="Erwin A.L."/>
            <person name="Mizoguchi S.D."/>
            <person name="Warrener P."/>
            <person name="Hickey M.J."/>
            <person name="Brinkman F.S.L."/>
            <person name="Hufnagle W.O."/>
            <person name="Kowalik D.J."/>
            <person name="Lagrou M."/>
            <person name="Garber R.L."/>
            <person name="Goltry L."/>
            <person name="Tolentino E."/>
            <person name="Westbrock-Wadman S."/>
            <person name="Yuan Y."/>
            <person name="Brody L.L."/>
            <person name="Coulter S.N."/>
            <person name="Folger K.R."/>
            <person name="Kas A."/>
            <person name="Larbig K."/>
            <person name="Lim R.M."/>
            <person name="Smith K.A."/>
            <person name="Spencer D.H."/>
            <person name="Wong G.K.-S."/>
            <person name="Wu Z."/>
            <person name="Paulsen I.T."/>
            <person name="Reizer J."/>
            <person name="Saier M.H. Jr."/>
            <person name="Hancock R.E.W."/>
            <person name="Lory S."/>
            <person name="Olson M.V."/>
        </authorList>
    </citation>
    <scope>NUCLEOTIDE SEQUENCE [LARGE SCALE GENOMIC DNA]</scope>
    <source>
        <strain>ATCC 15692 / DSM 22644 / CIP 104116 / JCM 14847 / LMG 12228 / 1C / PRS 101 / PAO1</strain>
    </source>
</reference>
<feature type="chain" id="PRO_0000124970" description="Large ribosomal subunit protein uL5">
    <location>
        <begin position="1"/>
        <end position="179"/>
    </location>
</feature>
<comment type="function">
    <text evidence="1">This is one of the proteins that bind and probably mediate the attachment of the 5S RNA into the large ribosomal subunit, where it forms part of the central protuberance. In the 70S ribosome it contacts protein S13 of the 30S subunit (bridge B1b), connecting the 2 subunits; this bridge is implicated in subunit movement. Contacts the P site tRNA; the 5S rRNA and some of its associated proteins might help stabilize positioning of ribosome-bound tRNAs.</text>
</comment>
<comment type="subunit">
    <text evidence="1">Part of the 50S ribosomal subunit; part of the 5S rRNA/L5/L18/L25 subcomplex. Contacts the 5S rRNA and the P site tRNA. Forms a bridge to the 30S subunit in the 70S ribosome.</text>
</comment>
<comment type="similarity">
    <text evidence="1">Belongs to the universal ribosomal protein uL5 family.</text>
</comment>
<protein>
    <recommendedName>
        <fullName evidence="1">Large ribosomal subunit protein uL5</fullName>
    </recommendedName>
    <alternativeName>
        <fullName evidence="2">50S ribosomal protein L5</fullName>
    </alternativeName>
</protein>
<accession>Q9HWE7</accession>